<dbReference type="EMBL" id="D89146">
    <property type="protein sequence ID" value="BAA13808.1"/>
    <property type="molecule type" value="mRNA"/>
</dbReference>
<dbReference type="EMBL" id="CU329672">
    <property type="protein sequence ID" value="CAA19360.1"/>
    <property type="molecule type" value="Genomic_DNA"/>
</dbReference>
<dbReference type="PIR" id="T41556">
    <property type="entry name" value="T41556"/>
</dbReference>
<dbReference type="PIR" id="T42422">
    <property type="entry name" value="T42422"/>
</dbReference>
<dbReference type="RefSeq" id="NP_588545.1">
    <property type="nucleotide sequence ID" value="NM_001023532.2"/>
</dbReference>
<dbReference type="SMR" id="P78797"/>
<dbReference type="BioGRID" id="275319">
    <property type="interactions" value="6"/>
</dbReference>
<dbReference type="iPTMnet" id="P78797"/>
<dbReference type="PaxDb" id="4896-SPCC70.10.1"/>
<dbReference type="EnsemblFungi" id="SPCC70.10.1">
    <property type="protein sequence ID" value="SPCC70.10.1:pep"/>
    <property type="gene ID" value="SPCC70.10"/>
</dbReference>
<dbReference type="KEGG" id="spo:2538735"/>
<dbReference type="PomBase" id="SPCC70.10"/>
<dbReference type="VEuPathDB" id="FungiDB:SPCC70.10"/>
<dbReference type="HOGENOM" id="CLU_1741640_0_0_1"/>
<dbReference type="InParanoid" id="P78797"/>
<dbReference type="OMA" id="AVNHERP"/>
<dbReference type="PRO" id="PR:P78797"/>
<dbReference type="Proteomes" id="UP000002485">
    <property type="component" value="Chromosome III"/>
</dbReference>
<dbReference type="GO" id="GO:0000324">
    <property type="term" value="C:fungal-type vacuole"/>
    <property type="evidence" value="ECO:0007005"/>
    <property type="project" value="PomBase"/>
</dbReference>
<sequence>MFFIVAAGFVIAALIAAIGMAINRFFVRRRQARAGQTKPATTRPMAEARARPGATAVPRRSPTSPQSAYVPATVYTSPIGSPRRGSVRYTHVMAHPNTTTTVSENLPEEVPPPYSPAATASNTPQNEASPAATEAVNHERPASPPPVYRPPEEMV</sequence>
<accession>P78797</accession>
<accession>O74530</accession>
<organism>
    <name type="scientific">Schizosaccharomyces pombe (strain 972 / ATCC 24843)</name>
    <name type="common">Fission yeast</name>
    <dbReference type="NCBI Taxonomy" id="284812"/>
    <lineage>
        <taxon>Eukaryota</taxon>
        <taxon>Fungi</taxon>
        <taxon>Dikarya</taxon>
        <taxon>Ascomycota</taxon>
        <taxon>Taphrinomycotina</taxon>
        <taxon>Schizosaccharomycetes</taxon>
        <taxon>Schizosaccharomycetales</taxon>
        <taxon>Schizosaccharomycetaceae</taxon>
        <taxon>Schizosaccharomyces</taxon>
    </lineage>
</organism>
<protein>
    <recommendedName>
        <fullName>Uncharacterized proline-rich protein C70.10</fullName>
    </recommendedName>
</protein>
<evidence type="ECO:0000255" key="1"/>
<evidence type="ECO:0000256" key="2">
    <source>
        <dbReference type="SAM" id="MobiDB-lite"/>
    </source>
</evidence>
<evidence type="ECO:0000305" key="3"/>
<proteinExistence type="evidence at transcript level"/>
<feature type="signal peptide" evidence="1">
    <location>
        <begin position="1"/>
        <end position="21"/>
    </location>
</feature>
<feature type="chain" id="PRO_0000014206" description="Uncharacterized proline-rich protein C70.10">
    <location>
        <begin position="22"/>
        <end position="155"/>
    </location>
</feature>
<feature type="region of interest" description="Disordered" evidence="2">
    <location>
        <begin position="35"/>
        <end position="155"/>
    </location>
</feature>
<feature type="compositionally biased region" description="Polar residues" evidence="2">
    <location>
        <begin position="118"/>
        <end position="128"/>
    </location>
</feature>
<feature type="sequence conflict" description="In Ref. 1; BAA13808." evidence="3" ref="1">
    <original>V</original>
    <variation>A</variation>
    <location>
        <position position="70"/>
    </location>
</feature>
<keyword id="KW-1185">Reference proteome</keyword>
<keyword id="KW-0732">Signal</keyword>
<reference key="1">
    <citation type="journal article" date="1997" name="DNA Res.">
        <title>Identification of open reading frames in Schizosaccharomyces pombe cDNAs.</title>
        <authorList>
            <person name="Yoshioka S."/>
            <person name="Kato K."/>
            <person name="Nakai K."/>
            <person name="Okayama H."/>
            <person name="Nojima H."/>
        </authorList>
    </citation>
    <scope>NUCLEOTIDE SEQUENCE [LARGE SCALE MRNA]</scope>
    <source>
        <strain>PR745</strain>
    </source>
</reference>
<reference key="2">
    <citation type="journal article" date="2002" name="Nature">
        <title>The genome sequence of Schizosaccharomyces pombe.</title>
        <authorList>
            <person name="Wood V."/>
            <person name="Gwilliam R."/>
            <person name="Rajandream M.A."/>
            <person name="Lyne M.H."/>
            <person name="Lyne R."/>
            <person name="Stewart A."/>
            <person name="Sgouros J.G."/>
            <person name="Peat N."/>
            <person name="Hayles J."/>
            <person name="Baker S.G."/>
            <person name="Basham D."/>
            <person name="Bowman S."/>
            <person name="Brooks K."/>
            <person name="Brown D."/>
            <person name="Brown S."/>
            <person name="Chillingworth T."/>
            <person name="Churcher C.M."/>
            <person name="Collins M."/>
            <person name="Connor R."/>
            <person name="Cronin A."/>
            <person name="Davis P."/>
            <person name="Feltwell T."/>
            <person name="Fraser A."/>
            <person name="Gentles S."/>
            <person name="Goble A."/>
            <person name="Hamlin N."/>
            <person name="Harris D.E."/>
            <person name="Hidalgo J."/>
            <person name="Hodgson G."/>
            <person name="Holroyd S."/>
            <person name="Hornsby T."/>
            <person name="Howarth S."/>
            <person name="Huckle E.J."/>
            <person name="Hunt S."/>
            <person name="Jagels K."/>
            <person name="James K.D."/>
            <person name="Jones L."/>
            <person name="Jones M."/>
            <person name="Leather S."/>
            <person name="McDonald S."/>
            <person name="McLean J."/>
            <person name="Mooney P."/>
            <person name="Moule S."/>
            <person name="Mungall K.L."/>
            <person name="Murphy L.D."/>
            <person name="Niblett D."/>
            <person name="Odell C."/>
            <person name="Oliver K."/>
            <person name="O'Neil S."/>
            <person name="Pearson D."/>
            <person name="Quail M.A."/>
            <person name="Rabbinowitsch E."/>
            <person name="Rutherford K.M."/>
            <person name="Rutter S."/>
            <person name="Saunders D."/>
            <person name="Seeger K."/>
            <person name="Sharp S."/>
            <person name="Skelton J."/>
            <person name="Simmonds M.N."/>
            <person name="Squares R."/>
            <person name="Squares S."/>
            <person name="Stevens K."/>
            <person name="Taylor K."/>
            <person name="Taylor R.G."/>
            <person name="Tivey A."/>
            <person name="Walsh S.V."/>
            <person name="Warren T."/>
            <person name="Whitehead S."/>
            <person name="Woodward J.R."/>
            <person name="Volckaert G."/>
            <person name="Aert R."/>
            <person name="Robben J."/>
            <person name="Grymonprez B."/>
            <person name="Weltjens I."/>
            <person name="Vanstreels E."/>
            <person name="Rieger M."/>
            <person name="Schaefer M."/>
            <person name="Mueller-Auer S."/>
            <person name="Gabel C."/>
            <person name="Fuchs M."/>
            <person name="Duesterhoeft A."/>
            <person name="Fritzc C."/>
            <person name="Holzer E."/>
            <person name="Moestl D."/>
            <person name="Hilbert H."/>
            <person name="Borzym K."/>
            <person name="Langer I."/>
            <person name="Beck A."/>
            <person name="Lehrach H."/>
            <person name="Reinhardt R."/>
            <person name="Pohl T.M."/>
            <person name="Eger P."/>
            <person name="Zimmermann W."/>
            <person name="Wedler H."/>
            <person name="Wambutt R."/>
            <person name="Purnelle B."/>
            <person name="Goffeau A."/>
            <person name="Cadieu E."/>
            <person name="Dreano S."/>
            <person name="Gloux S."/>
            <person name="Lelaure V."/>
            <person name="Mottier S."/>
            <person name="Galibert F."/>
            <person name="Aves S.J."/>
            <person name="Xiang Z."/>
            <person name="Hunt C."/>
            <person name="Moore K."/>
            <person name="Hurst S.M."/>
            <person name="Lucas M."/>
            <person name="Rochet M."/>
            <person name="Gaillardin C."/>
            <person name="Tallada V.A."/>
            <person name="Garzon A."/>
            <person name="Thode G."/>
            <person name="Daga R.R."/>
            <person name="Cruzado L."/>
            <person name="Jimenez J."/>
            <person name="Sanchez M."/>
            <person name="del Rey F."/>
            <person name="Benito J."/>
            <person name="Dominguez A."/>
            <person name="Revuelta J.L."/>
            <person name="Moreno S."/>
            <person name="Armstrong J."/>
            <person name="Forsburg S.L."/>
            <person name="Cerutti L."/>
            <person name="Lowe T."/>
            <person name="McCombie W.R."/>
            <person name="Paulsen I."/>
            <person name="Potashkin J."/>
            <person name="Shpakovski G.V."/>
            <person name="Ussery D."/>
            <person name="Barrell B.G."/>
            <person name="Nurse P."/>
        </authorList>
    </citation>
    <scope>NUCLEOTIDE SEQUENCE [LARGE SCALE GENOMIC DNA]</scope>
    <source>
        <strain>972 / ATCC 24843</strain>
    </source>
</reference>
<gene>
    <name type="ORF">SPCC70.10</name>
</gene>
<name>YJ4A_SCHPO</name>